<gene>
    <name evidence="1" type="primary">moaC</name>
    <name type="ordered locus">VC_1026</name>
</gene>
<protein>
    <recommendedName>
        <fullName evidence="1">Cyclic pyranopterin monophosphate synthase</fullName>
        <ecNumber evidence="1">4.6.1.17</ecNumber>
    </recommendedName>
    <alternativeName>
        <fullName evidence="1">Molybdenum cofactor biosynthesis protein C</fullName>
    </alternativeName>
</protein>
<sequence length="160" mass="17340">MMSQLTHINASGEANMVDVSNKADTVREARAEAYVRMAPETLQLILSGQHHKGDVFATARIAGIQAAKRTWELIPLCHPLLLSKVEVQLEALPEQSSVRIESLCKLSGKTGVEMEALTAASVAALTIYDMCKAVQKDIVIENVRLLEKSGGKSGHFKVDA</sequence>
<feature type="chain" id="PRO_0000097841" description="Cyclic pyranopterin monophosphate synthase">
    <location>
        <begin position="1"/>
        <end position="160"/>
    </location>
</feature>
<feature type="active site" evidence="1">
    <location>
        <position position="129"/>
    </location>
</feature>
<feature type="binding site" evidence="1">
    <location>
        <begin position="76"/>
        <end position="78"/>
    </location>
    <ligand>
        <name>substrate</name>
    </ligand>
</feature>
<feature type="binding site" evidence="1">
    <location>
        <begin position="114"/>
        <end position="115"/>
    </location>
    <ligand>
        <name>substrate</name>
    </ligand>
</feature>
<proteinExistence type="inferred from homology"/>
<name>MOAC_VIBCH</name>
<accession>Q9KT79</accession>
<organism>
    <name type="scientific">Vibrio cholerae serotype O1 (strain ATCC 39315 / El Tor Inaba N16961)</name>
    <dbReference type="NCBI Taxonomy" id="243277"/>
    <lineage>
        <taxon>Bacteria</taxon>
        <taxon>Pseudomonadati</taxon>
        <taxon>Pseudomonadota</taxon>
        <taxon>Gammaproteobacteria</taxon>
        <taxon>Vibrionales</taxon>
        <taxon>Vibrionaceae</taxon>
        <taxon>Vibrio</taxon>
    </lineage>
</organism>
<evidence type="ECO:0000255" key="1">
    <source>
        <dbReference type="HAMAP-Rule" id="MF_01224"/>
    </source>
</evidence>
<reference key="1">
    <citation type="journal article" date="2000" name="Nature">
        <title>DNA sequence of both chromosomes of the cholera pathogen Vibrio cholerae.</title>
        <authorList>
            <person name="Heidelberg J.F."/>
            <person name="Eisen J.A."/>
            <person name="Nelson W.C."/>
            <person name="Clayton R.A."/>
            <person name="Gwinn M.L."/>
            <person name="Dodson R.J."/>
            <person name="Haft D.H."/>
            <person name="Hickey E.K."/>
            <person name="Peterson J.D."/>
            <person name="Umayam L.A."/>
            <person name="Gill S.R."/>
            <person name="Nelson K.E."/>
            <person name="Read T.D."/>
            <person name="Tettelin H."/>
            <person name="Richardson D.L."/>
            <person name="Ermolaeva M.D."/>
            <person name="Vamathevan J.J."/>
            <person name="Bass S."/>
            <person name="Qin H."/>
            <person name="Dragoi I."/>
            <person name="Sellers P."/>
            <person name="McDonald L.A."/>
            <person name="Utterback T.R."/>
            <person name="Fleischmann R.D."/>
            <person name="Nierman W.C."/>
            <person name="White O."/>
            <person name="Salzberg S.L."/>
            <person name="Smith H.O."/>
            <person name="Colwell R.R."/>
            <person name="Mekalanos J.J."/>
            <person name="Venter J.C."/>
            <person name="Fraser C.M."/>
        </authorList>
    </citation>
    <scope>NUCLEOTIDE SEQUENCE [LARGE SCALE GENOMIC DNA]</scope>
    <source>
        <strain>ATCC 39315 / El Tor Inaba N16961</strain>
    </source>
</reference>
<dbReference type="EC" id="4.6.1.17" evidence="1"/>
<dbReference type="EMBL" id="AE003852">
    <property type="protein sequence ID" value="AAF94185.1"/>
    <property type="molecule type" value="Genomic_DNA"/>
</dbReference>
<dbReference type="PIR" id="H82250">
    <property type="entry name" value="H82250"/>
</dbReference>
<dbReference type="RefSeq" id="NP_230671.1">
    <property type="nucleotide sequence ID" value="NC_002505.1"/>
</dbReference>
<dbReference type="SMR" id="Q9KT79"/>
<dbReference type="STRING" id="243277.VC_1026"/>
<dbReference type="DNASU" id="2614296"/>
<dbReference type="EnsemblBacteria" id="AAF94185">
    <property type="protein sequence ID" value="AAF94185"/>
    <property type="gene ID" value="VC_1026"/>
</dbReference>
<dbReference type="KEGG" id="vch:VC_1026"/>
<dbReference type="PATRIC" id="fig|243277.26.peg.980"/>
<dbReference type="eggNOG" id="COG0315">
    <property type="taxonomic scope" value="Bacteria"/>
</dbReference>
<dbReference type="HOGENOM" id="CLU_074693_1_1_6"/>
<dbReference type="UniPathway" id="UPA00344"/>
<dbReference type="Proteomes" id="UP000000584">
    <property type="component" value="Chromosome 1"/>
</dbReference>
<dbReference type="GO" id="GO:0061799">
    <property type="term" value="F:cyclic pyranopterin monophosphate synthase activity"/>
    <property type="evidence" value="ECO:0007669"/>
    <property type="project" value="UniProtKB-UniRule"/>
</dbReference>
<dbReference type="GO" id="GO:0006777">
    <property type="term" value="P:Mo-molybdopterin cofactor biosynthetic process"/>
    <property type="evidence" value="ECO:0007669"/>
    <property type="project" value="UniProtKB-UniRule"/>
</dbReference>
<dbReference type="CDD" id="cd01420">
    <property type="entry name" value="MoaC_PE"/>
    <property type="match status" value="1"/>
</dbReference>
<dbReference type="FunFam" id="3.30.70.640:FF:000001">
    <property type="entry name" value="Cyclic pyranopterin monophosphate synthase"/>
    <property type="match status" value="1"/>
</dbReference>
<dbReference type="Gene3D" id="3.30.70.640">
    <property type="entry name" value="Molybdopterin cofactor biosynthesis C (MoaC) domain"/>
    <property type="match status" value="1"/>
</dbReference>
<dbReference type="HAMAP" id="MF_01224_B">
    <property type="entry name" value="MoaC_B"/>
    <property type="match status" value="1"/>
</dbReference>
<dbReference type="InterPro" id="IPR023045">
    <property type="entry name" value="MoaC"/>
</dbReference>
<dbReference type="InterPro" id="IPR047594">
    <property type="entry name" value="MoaC_bact/euk"/>
</dbReference>
<dbReference type="InterPro" id="IPR036522">
    <property type="entry name" value="MoaC_sf"/>
</dbReference>
<dbReference type="InterPro" id="IPR050105">
    <property type="entry name" value="MoCo_biosynth_MoaA/MoaC"/>
</dbReference>
<dbReference type="InterPro" id="IPR002820">
    <property type="entry name" value="Mopterin_CF_biosynth-C_dom"/>
</dbReference>
<dbReference type="NCBIfam" id="TIGR00581">
    <property type="entry name" value="moaC"/>
    <property type="match status" value="1"/>
</dbReference>
<dbReference type="NCBIfam" id="NF006870">
    <property type="entry name" value="PRK09364.1"/>
    <property type="match status" value="1"/>
</dbReference>
<dbReference type="PANTHER" id="PTHR22960:SF0">
    <property type="entry name" value="MOLYBDENUM COFACTOR BIOSYNTHESIS PROTEIN 1"/>
    <property type="match status" value="1"/>
</dbReference>
<dbReference type="PANTHER" id="PTHR22960">
    <property type="entry name" value="MOLYBDOPTERIN COFACTOR SYNTHESIS PROTEIN A"/>
    <property type="match status" value="1"/>
</dbReference>
<dbReference type="Pfam" id="PF01967">
    <property type="entry name" value="MoaC"/>
    <property type="match status" value="1"/>
</dbReference>
<dbReference type="SUPFAM" id="SSF55040">
    <property type="entry name" value="Molybdenum cofactor biosynthesis protein C, MoaC"/>
    <property type="match status" value="1"/>
</dbReference>
<comment type="function">
    <text evidence="1">Catalyzes the conversion of (8S)-3',8-cyclo-7,8-dihydroguanosine 5'-triphosphate to cyclic pyranopterin monophosphate (cPMP).</text>
</comment>
<comment type="catalytic activity">
    <reaction evidence="1">
        <text>(8S)-3',8-cyclo-7,8-dihydroguanosine 5'-triphosphate = cyclic pyranopterin phosphate + diphosphate</text>
        <dbReference type="Rhea" id="RHEA:49580"/>
        <dbReference type="ChEBI" id="CHEBI:33019"/>
        <dbReference type="ChEBI" id="CHEBI:59648"/>
        <dbReference type="ChEBI" id="CHEBI:131766"/>
        <dbReference type="EC" id="4.6.1.17"/>
    </reaction>
</comment>
<comment type="pathway">
    <text evidence="1">Cofactor biosynthesis; molybdopterin biosynthesis.</text>
</comment>
<comment type="subunit">
    <text evidence="1">Homohexamer; trimer of dimers.</text>
</comment>
<comment type="similarity">
    <text evidence="1">Belongs to the MoaC family.</text>
</comment>
<keyword id="KW-0456">Lyase</keyword>
<keyword id="KW-0501">Molybdenum cofactor biosynthesis</keyword>
<keyword id="KW-1185">Reference proteome</keyword>